<evidence type="ECO:0000255" key="1">
    <source>
        <dbReference type="HAMAP-Rule" id="MF_00232"/>
    </source>
</evidence>
<name>IF2B_METM6</name>
<accession>A9A7T1</accession>
<organism>
    <name type="scientific">Methanococcus maripaludis (strain C6 / ATCC BAA-1332)</name>
    <dbReference type="NCBI Taxonomy" id="444158"/>
    <lineage>
        <taxon>Archaea</taxon>
        <taxon>Methanobacteriati</taxon>
        <taxon>Methanobacteriota</taxon>
        <taxon>Methanomada group</taxon>
        <taxon>Methanococci</taxon>
        <taxon>Methanococcales</taxon>
        <taxon>Methanococcaceae</taxon>
        <taxon>Methanococcus</taxon>
    </lineage>
</organism>
<comment type="function">
    <text evidence="1">eIF-2 functions in the early steps of protein synthesis by forming a ternary complex with GTP and initiator tRNA.</text>
</comment>
<comment type="subunit">
    <text evidence="1">Heterotrimer composed of an alpha, a beta and a gamma chain.</text>
</comment>
<comment type="similarity">
    <text evidence="1">Belongs to the eIF-2-beta/eIF-5 family.</text>
</comment>
<reference key="1">
    <citation type="submission" date="2007-10" db="EMBL/GenBank/DDBJ databases">
        <title>Complete sequence of Methanococcus maripaludis C6.</title>
        <authorList>
            <consortium name="US DOE Joint Genome Institute"/>
            <person name="Copeland A."/>
            <person name="Lucas S."/>
            <person name="Lapidus A."/>
            <person name="Barry K."/>
            <person name="Glavina del Rio T."/>
            <person name="Dalin E."/>
            <person name="Tice H."/>
            <person name="Pitluck S."/>
            <person name="Clum A."/>
            <person name="Schmutz J."/>
            <person name="Larimer F."/>
            <person name="Land M."/>
            <person name="Hauser L."/>
            <person name="Kyrpides N."/>
            <person name="Mikhailova N."/>
            <person name="Sieprawska-Lupa M."/>
            <person name="Whitman W.B."/>
            <person name="Richardson P."/>
        </authorList>
    </citation>
    <scope>NUCLEOTIDE SEQUENCE [LARGE SCALE GENOMIC DNA]</scope>
    <source>
        <strain>C6 / ATCC BAA-1332</strain>
    </source>
</reference>
<dbReference type="EMBL" id="CP000867">
    <property type="protein sequence ID" value="ABX01473.1"/>
    <property type="molecule type" value="Genomic_DNA"/>
</dbReference>
<dbReference type="SMR" id="A9A7T1"/>
<dbReference type="STRING" id="444158.MmarC6_0656"/>
<dbReference type="KEGG" id="mmx:MmarC6_0656"/>
<dbReference type="eggNOG" id="arCOG01640">
    <property type="taxonomic scope" value="Archaea"/>
</dbReference>
<dbReference type="HOGENOM" id="CLU_026663_3_1_2"/>
<dbReference type="OrthoDB" id="38099at2157"/>
<dbReference type="PhylomeDB" id="A9A7T1"/>
<dbReference type="GO" id="GO:0003743">
    <property type="term" value="F:translation initiation factor activity"/>
    <property type="evidence" value="ECO:0007669"/>
    <property type="project" value="UniProtKB-UniRule"/>
</dbReference>
<dbReference type="FunFam" id="3.30.30.170:FF:000001">
    <property type="entry name" value="Eukaryotic translation initiation factor 2 subunit"/>
    <property type="match status" value="1"/>
</dbReference>
<dbReference type="Gene3D" id="3.30.30.170">
    <property type="match status" value="1"/>
</dbReference>
<dbReference type="HAMAP" id="MF_00232">
    <property type="entry name" value="eIF_2_beta"/>
    <property type="match status" value="1"/>
</dbReference>
<dbReference type="InterPro" id="IPR045196">
    <property type="entry name" value="IF2/IF5"/>
</dbReference>
<dbReference type="InterPro" id="IPR004458">
    <property type="entry name" value="TIF2_bsu_arc"/>
</dbReference>
<dbReference type="InterPro" id="IPR002735">
    <property type="entry name" value="Transl_init_fac_IF2/IF5_dom"/>
</dbReference>
<dbReference type="InterPro" id="IPR016189">
    <property type="entry name" value="Transl_init_fac_IF2/IF5_N"/>
</dbReference>
<dbReference type="InterPro" id="IPR016190">
    <property type="entry name" value="Transl_init_fac_IF2/IF5_Zn-bd"/>
</dbReference>
<dbReference type="NCBIfam" id="TIGR00311">
    <property type="entry name" value="aIF-2beta"/>
    <property type="match status" value="1"/>
</dbReference>
<dbReference type="NCBIfam" id="NF003067">
    <property type="entry name" value="PRK03988.1"/>
    <property type="match status" value="1"/>
</dbReference>
<dbReference type="PANTHER" id="PTHR23001">
    <property type="entry name" value="EUKARYOTIC TRANSLATION INITIATION FACTOR"/>
    <property type="match status" value="1"/>
</dbReference>
<dbReference type="PANTHER" id="PTHR23001:SF3">
    <property type="entry name" value="EUKARYOTIC TRANSLATION INITIATION FACTOR 2 SUBUNIT 2"/>
    <property type="match status" value="1"/>
</dbReference>
<dbReference type="Pfam" id="PF01873">
    <property type="entry name" value="eIF-5_eIF-2B"/>
    <property type="match status" value="1"/>
</dbReference>
<dbReference type="SMART" id="SM00653">
    <property type="entry name" value="eIF2B_5"/>
    <property type="match status" value="1"/>
</dbReference>
<dbReference type="SUPFAM" id="SSF100966">
    <property type="entry name" value="Translation initiation factor 2 beta, aIF2beta, N-terminal domain"/>
    <property type="match status" value="1"/>
</dbReference>
<dbReference type="SUPFAM" id="SSF75689">
    <property type="entry name" value="Zinc-binding domain of translation initiation factor 2 beta"/>
    <property type="match status" value="1"/>
</dbReference>
<protein>
    <recommendedName>
        <fullName evidence="1">Translation initiation factor 2 subunit beta</fullName>
    </recommendedName>
    <alternativeName>
        <fullName evidence="1">aIF2-beta</fullName>
    </alternativeName>
    <alternativeName>
        <fullName evidence="1">eIF-2-beta</fullName>
    </alternativeName>
</protein>
<proteinExistence type="inferred from homology"/>
<sequence>MVDYFDYNSLLTRAREQLPEEVFKDVRFEIPSADSFVEGNRTIIKNFKDIAKFMERDPQEFAKYVMKELGTAGDMEGVRLILQGKFGWRMVNEKIQNYVNEYVLCPECGKPDTKIVKEGRIHFLKCTACGAMKPVKTL</sequence>
<feature type="chain" id="PRO_1000100487" description="Translation initiation factor 2 subunit beta">
    <location>
        <begin position="1"/>
        <end position="138"/>
    </location>
</feature>
<keyword id="KW-0396">Initiation factor</keyword>
<keyword id="KW-0648">Protein biosynthesis</keyword>
<gene>
    <name evidence="1" type="primary">eif2b</name>
    <name type="ordered locus">MmarC6_0656</name>
</gene>